<reference key="1">
    <citation type="journal article" date="1996" name="Infect. Immun.">
        <title>Identification of an outer membrane protein involved in utilization of hemoglobin-haptoglobin complexes by nontypeable Haemophilus influenzae.</title>
        <authorList>
            <person name="Maciver I."/>
            <person name="Latimer J.L."/>
            <person name="Liem H.H."/>
            <person name="Mueller-Eberhard U."/>
            <person name="Hrkal Z."/>
            <person name="Hansen E.J."/>
        </authorList>
    </citation>
    <scope>NUCLEOTIDE SEQUENCE [GENOMIC DNA]</scope>
    <source>
        <strain>NTHi TN106</strain>
    </source>
</reference>
<accession>Q48153</accession>
<proteinExistence type="inferred from homology"/>
<dbReference type="EMBL" id="U43198">
    <property type="protein sequence ID" value="AAB36696.1"/>
    <property type="status" value="ALT_SEQ"/>
    <property type="molecule type" value="Genomic_DNA"/>
</dbReference>
<dbReference type="SMR" id="Q48153"/>
<dbReference type="GO" id="GO:0009279">
    <property type="term" value="C:cell outer membrane"/>
    <property type="evidence" value="ECO:0007669"/>
    <property type="project" value="UniProtKB-SubCell"/>
</dbReference>
<dbReference type="GO" id="GO:0015344">
    <property type="term" value="F:siderophore uptake transmembrane transporter activity"/>
    <property type="evidence" value="ECO:0007669"/>
    <property type="project" value="TreeGrafter"/>
</dbReference>
<dbReference type="Gene3D" id="2.40.170.20">
    <property type="entry name" value="TonB-dependent receptor, beta-barrel domain"/>
    <property type="match status" value="2"/>
</dbReference>
<dbReference type="Gene3D" id="2.170.130.10">
    <property type="entry name" value="TonB-dependent receptor, plug domain"/>
    <property type="match status" value="1"/>
</dbReference>
<dbReference type="InterPro" id="IPR012910">
    <property type="entry name" value="Plug_dom"/>
</dbReference>
<dbReference type="InterPro" id="IPR037066">
    <property type="entry name" value="Plug_dom_sf"/>
</dbReference>
<dbReference type="InterPro" id="IPR006970">
    <property type="entry name" value="PT"/>
</dbReference>
<dbReference type="InterPro" id="IPR039426">
    <property type="entry name" value="TonB-dep_rcpt-like"/>
</dbReference>
<dbReference type="InterPro" id="IPR000531">
    <property type="entry name" value="TonB-dep_rcpt_b-brl"/>
</dbReference>
<dbReference type="InterPro" id="IPR010949">
    <property type="entry name" value="TonB_Hb/transfer/lactofer_rcpt"/>
</dbReference>
<dbReference type="InterPro" id="IPR036942">
    <property type="entry name" value="TonB_rcpt_b-brl_sf"/>
</dbReference>
<dbReference type="InterPro" id="IPR010917">
    <property type="entry name" value="TonB_rcpt_CS"/>
</dbReference>
<dbReference type="NCBIfam" id="TIGR01786">
    <property type="entry name" value="TonB-hemlactrns"/>
    <property type="match status" value="1"/>
</dbReference>
<dbReference type="PANTHER" id="PTHR30069:SF29">
    <property type="entry name" value="HEMOGLOBIN AND HEMOGLOBIN-HAPTOGLOBIN-BINDING PROTEIN 1-RELATED"/>
    <property type="match status" value="1"/>
</dbReference>
<dbReference type="PANTHER" id="PTHR30069">
    <property type="entry name" value="TONB-DEPENDENT OUTER MEMBRANE RECEPTOR"/>
    <property type="match status" value="1"/>
</dbReference>
<dbReference type="Pfam" id="PF07715">
    <property type="entry name" value="Plug"/>
    <property type="match status" value="1"/>
</dbReference>
<dbReference type="Pfam" id="PF04886">
    <property type="entry name" value="PT"/>
    <property type="match status" value="1"/>
</dbReference>
<dbReference type="Pfam" id="PF00593">
    <property type="entry name" value="TonB_dep_Rec_b-barrel"/>
    <property type="match status" value="1"/>
</dbReference>
<dbReference type="SUPFAM" id="SSF56935">
    <property type="entry name" value="Porins"/>
    <property type="match status" value="1"/>
</dbReference>
<dbReference type="PROSITE" id="PS01156">
    <property type="entry name" value="TONB_DEPENDENT_REC_2"/>
    <property type="match status" value="1"/>
</dbReference>
<dbReference type="PROSITE" id="PS52016">
    <property type="entry name" value="TONB_DEPENDENT_REC_3"/>
    <property type="match status" value="1"/>
</dbReference>
<evidence type="ECO:0000255" key="1"/>
<evidence type="ECO:0000255" key="2">
    <source>
        <dbReference type="PROSITE-ProRule" id="PRU01360"/>
    </source>
</evidence>
<evidence type="ECO:0000305" key="3"/>
<comment type="function">
    <text>Acts as a receptor for the hemoglobin/haptoglobin complex of the human host and is required for heme uptake. Does not bind hemoglobin alone.</text>
</comment>
<comment type="subcellular location">
    <subcellularLocation>
        <location evidence="2">Cell outer membrane</location>
        <topology evidence="2">Multi-pass membrane protein</topology>
    </subcellularLocation>
</comment>
<comment type="miscellaneous">
    <text>This protein is subject to phase-variable expression associated with alteration in the length of the CCAA repeat region. This mechanism is called slipped-strand mispairing. Addition or loss of CCAA repeat units would change the reading frame and result in introduction of stop codons downstream of the repeat region. This may be a mechanism of regulation and a way to avoid the immunological response of the host.</text>
</comment>
<comment type="similarity">
    <text evidence="3">Belongs to the TonB-dependent receptor family. Hemoglobin/haptoglobin binding protein subfamily.</text>
</comment>
<comment type="sequence caution" evidence="3">
    <conflict type="frameshift">
        <sequence resource="EMBL-CDS" id="AAB36696"/>
    </conflict>
    <text>The actual position is difficult to determine as it occurs within the QPTN repeats.</text>
</comment>
<name>HHUA_HAEIF</name>
<keyword id="KW-0998">Cell outer membrane</keyword>
<keyword id="KW-0472">Membrane</keyword>
<keyword id="KW-0675">Receptor</keyword>
<keyword id="KW-0677">Repeat</keyword>
<keyword id="KW-0732">Signal</keyword>
<keyword id="KW-0798">TonB box</keyword>
<keyword id="KW-0812">Transmembrane</keyword>
<keyword id="KW-1134">Transmembrane beta strand</keyword>
<keyword id="KW-0813">Transport</keyword>
<sequence length="1046" mass="119296">MTNFRLNLLAYSVMLGLTAGVAYAAQPTNQPTNQPTNQPTNQDGNVSEQLEQINVLGSDNHNDNTPPKIAETIKTAKKPEKEQAQDVKDLVRYETGITVVEAGRFGNSGFAVRGVDENRVAVQIDGLHQAETISSQGFKELFEGYGNFNNTRNTAEIETLKQVTIRKGADSLKSGSGALGGSVSFDTKDARDYLLNKNYYASYKRGYNTADNQNLQTLTLAGRYKYFDAIAVITSRKGHELENYGYKNYNDRIQGREREKADPYRRTQESKLLKFAFQPTENHRLSVVVDLYKQTSKGHDFSYTLKQNTEHMTYDEVELRHTNDKVDRKNLAFTYENFTETPFWDTLKISYSHQKITTTARTDDYCDGNDKCALAGNPLGMKYNQDNQLVGEDGNLAKYKDINTKQTIHEKLPFTKPNEKWRYNRVDWDALKKKYPGVPIYASCIEENNDPSKYCSYDVEIPKKENTFEINGKQYDLLSEADKNVISDEQRLPTNSSYLFSCDGLNCDKDTIQGFEKKGTTVNIPFVVIEKNGKKYAKTEAVANNQLSGPYIFMPSKTGYQTNLWTQRDLTSETKQINLDLTKHLELGKTQHDLSYGGLWSEMEKSMTNISGDSPMNVKWWAQYPHSCDIFLPSSTPNGAPTLNPERTNTLCNNSNVYSFLIPVKTKTGALYFINDFRVNSHIAFNFGYRYDRVKYDPEYIPGKTPKIPDDMVVNLYVKQPTFDDTKVNLPPEELRKKEANAAANIKAIVQPKKFSASSYSVGTTLDPLNWLRLQAKYGKAFRAPTSDEIYFTFLHPDFSIRPNRDLQAETAKTKELALTLHNEIGYVTTSVFDTRYRNFIDLAYKGLYNVQRHSKLTPYHTYQNVNRPNAKVTGWEIAAQISLGKITQFLNGLNLSYKYTYQKGRIDGNIPMNAIQPKTSVYGVSYAHPADKFGLDLYFTHVSAKNAEDTYNMFYKEEGKKDSTIKWRSKSYTTIDLLGYIKPIKNLTLRAGVYNLTNRKYITWDSARSIRPFGTSNMINQKTGEGINRFYAPGRNYRMSVQFEF</sequence>
<organism>
    <name type="scientific">Haemophilus influenzae</name>
    <dbReference type="NCBI Taxonomy" id="727"/>
    <lineage>
        <taxon>Bacteria</taxon>
        <taxon>Pseudomonadati</taxon>
        <taxon>Pseudomonadota</taxon>
        <taxon>Gammaproteobacteria</taxon>
        <taxon>Pasteurellales</taxon>
        <taxon>Pasteurellaceae</taxon>
        <taxon>Haemophilus</taxon>
    </lineage>
</organism>
<protein>
    <recommendedName>
        <fullName>Hemoglobin-haptoglobin-binding protein A</fullName>
    </recommendedName>
    <alternativeName>
        <fullName>Hemoglobin-haptoglobin utilization protein A</fullName>
    </alternativeName>
</protein>
<gene>
    <name type="primary">hhuA</name>
</gene>
<feature type="signal peptide" evidence="1">
    <location>
        <begin position="1"/>
        <end position="24"/>
    </location>
</feature>
<feature type="chain" id="PRO_0000034784" description="Hemoglobin-haptoglobin-binding protein A">
    <location>
        <begin position="25"/>
        <end position="1046"/>
    </location>
</feature>
<feature type="repeat" description="1">
    <location>
        <begin position="26"/>
        <end position="29"/>
    </location>
</feature>
<feature type="repeat" description="2">
    <location>
        <begin position="30"/>
        <end position="33"/>
    </location>
</feature>
<feature type="repeat" description="3">
    <location>
        <begin position="34"/>
        <end position="37"/>
    </location>
</feature>
<feature type="repeat" description="4">
    <location>
        <begin position="38"/>
        <end position="41"/>
    </location>
</feature>
<feature type="domain" description="TBDR plug" evidence="2">
    <location>
        <begin position="61"/>
        <end position="188"/>
    </location>
</feature>
<feature type="domain" description="TBDR beta-barrel" evidence="2">
    <location>
        <begin position="196"/>
        <end position="1046"/>
    </location>
</feature>
<feature type="region of interest" description="4 X 4 AA tandem repeats of Q-P-T-N">
    <location>
        <begin position="26"/>
        <end position="41"/>
    </location>
</feature>
<feature type="short sequence motif" description="TonB box">
    <location>
        <begin position="51"/>
        <end position="58"/>
    </location>
</feature>
<feature type="short sequence motif" description="TonB C-terminal box">
    <location>
        <begin position="1029"/>
        <end position="1046"/>
    </location>
</feature>